<sequence>MGANRLNITWHDRVLTKGDYLKRNGHQPLVLWFTGLSGSGKSTLAHAVEEELFRKGCYTYILDGDNIRHGLNSDLGFSEADRRENIRRIGEVAKLFVDAGIIVLAAFISPYREDRERVRALFEPAEFIEVFVNCDLAVCESRDPKGLYRKARSGELKQFTGIDSPYEVPFSPELVVNTACSTVKSGVQSVLAFVRDRGLINGD</sequence>
<dbReference type="EC" id="2.7.1.25" evidence="1"/>
<dbReference type="EMBL" id="CP001390">
    <property type="protein sequence ID" value="ACM19798.1"/>
    <property type="molecule type" value="Genomic_DNA"/>
</dbReference>
<dbReference type="RefSeq" id="WP_012646527.1">
    <property type="nucleotide sequence ID" value="NC_011979.1"/>
</dbReference>
<dbReference type="SMR" id="B9M543"/>
<dbReference type="STRING" id="316067.Geob_1438"/>
<dbReference type="KEGG" id="geo:Geob_1438"/>
<dbReference type="eggNOG" id="COG0529">
    <property type="taxonomic scope" value="Bacteria"/>
</dbReference>
<dbReference type="HOGENOM" id="CLU_046932_1_1_7"/>
<dbReference type="OrthoDB" id="9804504at2"/>
<dbReference type="UniPathway" id="UPA00140">
    <property type="reaction ID" value="UER00205"/>
</dbReference>
<dbReference type="Proteomes" id="UP000007721">
    <property type="component" value="Chromosome"/>
</dbReference>
<dbReference type="GO" id="GO:0004020">
    <property type="term" value="F:adenylylsulfate kinase activity"/>
    <property type="evidence" value="ECO:0007669"/>
    <property type="project" value="UniProtKB-UniRule"/>
</dbReference>
<dbReference type="GO" id="GO:0005524">
    <property type="term" value="F:ATP binding"/>
    <property type="evidence" value="ECO:0007669"/>
    <property type="project" value="UniProtKB-UniRule"/>
</dbReference>
<dbReference type="GO" id="GO:0070814">
    <property type="term" value="P:hydrogen sulfide biosynthetic process"/>
    <property type="evidence" value="ECO:0007669"/>
    <property type="project" value="UniProtKB-UniRule"/>
</dbReference>
<dbReference type="GO" id="GO:0000103">
    <property type="term" value="P:sulfate assimilation"/>
    <property type="evidence" value="ECO:0007669"/>
    <property type="project" value="UniProtKB-UniRule"/>
</dbReference>
<dbReference type="CDD" id="cd02027">
    <property type="entry name" value="APSK"/>
    <property type="match status" value="1"/>
</dbReference>
<dbReference type="FunFam" id="3.40.50.300:FF:000212">
    <property type="entry name" value="Adenylyl-sulfate kinase"/>
    <property type="match status" value="1"/>
</dbReference>
<dbReference type="Gene3D" id="3.40.50.300">
    <property type="entry name" value="P-loop containing nucleotide triphosphate hydrolases"/>
    <property type="match status" value="1"/>
</dbReference>
<dbReference type="HAMAP" id="MF_00065">
    <property type="entry name" value="Adenylyl_sulf_kinase"/>
    <property type="match status" value="1"/>
</dbReference>
<dbReference type="InterPro" id="IPR002891">
    <property type="entry name" value="APS_kinase"/>
</dbReference>
<dbReference type="InterPro" id="IPR027417">
    <property type="entry name" value="P-loop_NTPase"/>
</dbReference>
<dbReference type="NCBIfam" id="TIGR00455">
    <property type="entry name" value="apsK"/>
    <property type="match status" value="1"/>
</dbReference>
<dbReference type="NCBIfam" id="NF003013">
    <property type="entry name" value="PRK03846.1"/>
    <property type="match status" value="1"/>
</dbReference>
<dbReference type="PANTHER" id="PTHR11055">
    <property type="entry name" value="BIFUNCTIONAL 3'-PHOSPHOADENOSINE 5'-PHOSPHOSULFATE SYNTHASE"/>
    <property type="match status" value="1"/>
</dbReference>
<dbReference type="PANTHER" id="PTHR11055:SF1">
    <property type="entry name" value="PAPS SYNTHETASE, ISOFORM D"/>
    <property type="match status" value="1"/>
</dbReference>
<dbReference type="Pfam" id="PF01583">
    <property type="entry name" value="APS_kinase"/>
    <property type="match status" value="1"/>
</dbReference>
<dbReference type="SUPFAM" id="SSF52540">
    <property type="entry name" value="P-loop containing nucleoside triphosphate hydrolases"/>
    <property type="match status" value="1"/>
</dbReference>
<protein>
    <recommendedName>
        <fullName evidence="1">Adenylyl-sulfate kinase</fullName>
        <ecNumber evidence="1">2.7.1.25</ecNumber>
    </recommendedName>
    <alternativeName>
        <fullName evidence="1">APS kinase</fullName>
    </alternativeName>
    <alternativeName>
        <fullName evidence="1">ATP adenosine-5'-phosphosulfate 3'-phosphotransferase</fullName>
    </alternativeName>
    <alternativeName>
        <fullName evidence="1">Adenosine-5'-phosphosulfate kinase</fullName>
    </alternativeName>
</protein>
<gene>
    <name evidence="1" type="primary">cysC</name>
    <name type="ordered locus">Geob_1438</name>
</gene>
<evidence type="ECO:0000255" key="1">
    <source>
        <dbReference type="HAMAP-Rule" id="MF_00065"/>
    </source>
</evidence>
<keyword id="KW-0067">ATP-binding</keyword>
<keyword id="KW-0418">Kinase</keyword>
<keyword id="KW-0547">Nucleotide-binding</keyword>
<keyword id="KW-0597">Phosphoprotein</keyword>
<keyword id="KW-1185">Reference proteome</keyword>
<keyword id="KW-0808">Transferase</keyword>
<accession>B9M543</accession>
<proteinExistence type="inferred from homology"/>
<reference key="1">
    <citation type="submission" date="2009-01" db="EMBL/GenBank/DDBJ databases">
        <title>Complete sequence of Geobacter sp. FRC-32.</title>
        <authorList>
            <consortium name="US DOE Joint Genome Institute"/>
            <person name="Lucas S."/>
            <person name="Copeland A."/>
            <person name="Lapidus A."/>
            <person name="Glavina del Rio T."/>
            <person name="Dalin E."/>
            <person name="Tice H."/>
            <person name="Bruce D."/>
            <person name="Goodwin L."/>
            <person name="Pitluck S."/>
            <person name="Saunders E."/>
            <person name="Brettin T."/>
            <person name="Detter J.C."/>
            <person name="Han C."/>
            <person name="Larimer F."/>
            <person name="Land M."/>
            <person name="Hauser L."/>
            <person name="Kyrpides N."/>
            <person name="Ovchinnikova G."/>
            <person name="Kostka J."/>
            <person name="Richardson P."/>
        </authorList>
    </citation>
    <scope>NUCLEOTIDE SEQUENCE [LARGE SCALE GENOMIC DNA]</scope>
    <source>
        <strain>DSM 22248 / JCM 15807 / FRC-32</strain>
    </source>
</reference>
<organism>
    <name type="scientific">Geotalea daltonii (strain DSM 22248 / JCM 15807 / FRC-32)</name>
    <name type="common">Geobacter daltonii</name>
    <dbReference type="NCBI Taxonomy" id="316067"/>
    <lineage>
        <taxon>Bacteria</taxon>
        <taxon>Pseudomonadati</taxon>
        <taxon>Thermodesulfobacteriota</taxon>
        <taxon>Desulfuromonadia</taxon>
        <taxon>Geobacterales</taxon>
        <taxon>Geobacteraceae</taxon>
        <taxon>Geotalea</taxon>
    </lineage>
</organism>
<feature type="chain" id="PRO_1000117954" description="Adenylyl-sulfate kinase">
    <location>
        <begin position="1"/>
        <end position="203"/>
    </location>
</feature>
<feature type="active site" description="Phosphoserine intermediate" evidence="1">
    <location>
        <position position="109"/>
    </location>
</feature>
<feature type="binding site" evidence="1">
    <location>
        <begin position="35"/>
        <end position="42"/>
    </location>
    <ligand>
        <name>ATP</name>
        <dbReference type="ChEBI" id="CHEBI:30616"/>
    </ligand>
</feature>
<name>CYSC_GEODF</name>
<comment type="function">
    <text evidence="1">Catalyzes the synthesis of activated sulfate.</text>
</comment>
<comment type="catalytic activity">
    <reaction evidence="1">
        <text>adenosine 5'-phosphosulfate + ATP = 3'-phosphoadenylyl sulfate + ADP + H(+)</text>
        <dbReference type="Rhea" id="RHEA:24152"/>
        <dbReference type="ChEBI" id="CHEBI:15378"/>
        <dbReference type="ChEBI" id="CHEBI:30616"/>
        <dbReference type="ChEBI" id="CHEBI:58243"/>
        <dbReference type="ChEBI" id="CHEBI:58339"/>
        <dbReference type="ChEBI" id="CHEBI:456216"/>
        <dbReference type="EC" id="2.7.1.25"/>
    </reaction>
</comment>
<comment type="pathway">
    <text evidence="1">Sulfur metabolism; hydrogen sulfide biosynthesis; sulfite from sulfate: step 2/3.</text>
</comment>
<comment type="similarity">
    <text evidence="1">Belongs to the APS kinase family.</text>
</comment>